<protein>
    <recommendedName>
        <fullName evidence="1">Cysteine--tRNA ligase</fullName>
        <ecNumber evidence="1">6.1.1.16</ecNumber>
    </recommendedName>
    <alternativeName>
        <fullName evidence="1">Cysteinyl-tRNA synthetase</fullName>
        <shortName evidence="1">CysRS</shortName>
    </alternativeName>
</protein>
<accession>Q2A1T7</accession>
<reference key="1">
    <citation type="submission" date="2006-03" db="EMBL/GenBank/DDBJ databases">
        <title>Complete genome sequence of Francisella tularensis LVS (Live Vaccine Strain).</title>
        <authorList>
            <person name="Chain P."/>
            <person name="Larimer F."/>
            <person name="Land M."/>
            <person name="Stilwagen S."/>
            <person name="Larsson P."/>
            <person name="Bearden S."/>
            <person name="Chu M."/>
            <person name="Oyston P."/>
            <person name="Forsman M."/>
            <person name="Andersson S."/>
            <person name="Lindler L."/>
            <person name="Titball R."/>
            <person name="Garcia E."/>
        </authorList>
    </citation>
    <scope>NUCLEOTIDE SEQUENCE [LARGE SCALE GENOMIC DNA]</scope>
    <source>
        <strain>LVS</strain>
    </source>
</reference>
<sequence>MDFCFMIFYNSLSGQKEQFKPIEANKIKMYACGVTVYDDCHIGHARTYIAFDVINRYFKYRGYDVTLVRNITDIDDKIIKRANENGESTTELVERNIKAMHDVFARLNILKPSKEPRATETIPEMVAMIETLIKKGYAYQGANGDVFYRVTKFADYGKLSKQNLEALQQGSRVDVVEEKENPMDFVLWKMAKEGEPAWDSPWGAGRPGWHIECSAMSKKLLGDTFDIHAGGSDLRFPHHENEIAQSEACNECTFANYWLHSGMVKVNAEKMSKSLNNFFTIVEVLEEYHPEVVRYFLASTVYRSEINYSKENLENAKASVERLFNALRDIEPIEVNLPDDASEYEEKFIKAMDNDFNTPEALAVLFSLAKEINTLKTTNKYKASGYAYLLRKLCDVLGILFTDIEEYFKQGDGADASEIEKLIAERTQAKKDKNYARADEIRNQLQQQGIILEDSATGTTWKKG</sequence>
<dbReference type="EC" id="6.1.1.16" evidence="1"/>
<dbReference type="EMBL" id="AM233362">
    <property type="protein sequence ID" value="CAJ80122.1"/>
    <property type="molecule type" value="Genomic_DNA"/>
</dbReference>
<dbReference type="RefSeq" id="WP_003017134.1">
    <property type="nucleotide sequence ID" value="NZ_CP009694.1"/>
</dbReference>
<dbReference type="SMR" id="Q2A1T7"/>
<dbReference type="GeneID" id="75264190"/>
<dbReference type="KEGG" id="ftl:FTL_1683"/>
<dbReference type="Proteomes" id="UP000001944">
    <property type="component" value="Chromosome"/>
</dbReference>
<dbReference type="GO" id="GO:0005829">
    <property type="term" value="C:cytosol"/>
    <property type="evidence" value="ECO:0007669"/>
    <property type="project" value="TreeGrafter"/>
</dbReference>
<dbReference type="GO" id="GO:0005524">
    <property type="term" value="F:ATP binding"/>
    <property type="evidence" value="ECO:0007669"/>
    <property type="project" value="UniProtKB-UniRule"/>
</dbReference>
<dbReference type="GO" id="GO:0004817">
    <property type="term" value="F:cysteine-tRNA ligase activity"/>
    <property type="evidence" value="ECO:0007669"/>
    <property type="project" value="UniProtKB-UniRule"/>
</dbReference>
<dbReference type="GO" id="GO:0008270">
    <property type="term" value="F:zinc ion binding"/>
    <property type="evidence" value="ECO:0007669"/>
    <property type="project" value="UniProtKB-UniRule"/>
</dbReference>
<dbReference type="GO" id="GO:0006423">
    <property type="term" value="P:cysteinyl-tRNA aminoacylation"/>
    <property type="evidence" value="ECO:0007669"/>
    <property type="project" value="UniProtKB-UniRule"/>
</dbReference>
<dbReference type="CDD" id="cd07963">
    <property type="entry name" value="Anticodon_Ia_Cys"/>
    <property type="match status" value="1"/>
</dbReference>
<dbReference type="CDD" id="cd00672">
    <property type="entry name" value="CysRS_core"/>
    <property type="match status" value="1"/>
</dbReference>
<dbReference type="FunFam" id="3.40.50.620:FF:000009">
    <property type="entry name" value="Cysteine--tRNA ligase"/>
    <property type="match status" value="1"/>
</dbReference>
<dbReference type="Gene3D" id="1.20.120.1910">
    <property type="entry name" value="Cysteine-tRNA ligase, C-terminal anti-codon recognition domain"/>
    <property type="match status" value="1"/>
</dbReference>
<dbReference type="Gene3D" id="3.40.50.620">
    <property type="entry name" value="HUPs"/>
    <property type="match status" value="1"/>
</dbReference>
<dbReference type="HAMAP" id="MF_00041">
    <property type="entry name" value="Cys_tRNA_synth"/>
    <property type="match status" value="1"/>
</dbReference>
<dbReference type="InterPro" id="IPR015803">
    <property type="entry name" value="Cys-tRNA-ligase"/>
</dbReference>
<dbReference type="InterPro" id="IPR015273">
    <property type="entry name" value="Cys-tRNA-synt_Ia_DALR"/>
</dbReference>
<dbReference type="InterPro" id="IPR024909">
    <property type="entry name" value="Cys-tRNA/MSH_ligase"/>
</dbReference>
<dbReference type="InterPro" id="IPR056411">
    <property type="entry name" value="CysS_C"/>
</dbReference>
<dbReference type="InterPro" id="IPR014729">
    <property type="entry name" value="Rossmann-like_a/b/a_fold"/>
</dbReference>
<dbReference type="InterPro" id="IPR032678">
    <property type="entry name" value="tRNA-synt_1_cat_dom"/>
</dbReference>
<dbReference type="InterPro" id="IPR009080">
    <property type="entry name" value="tRNAsynth_Ia_anticodon-bd"/>
</dbReference>
<dbReference type="NCBIfam" id="TIGR00435">
    <property type="entry name" value="cysS"/>
    <property type="match status" value="1"/>
</dbReference>
<dbReference type="PANTHER" id="PTHR10890:SF3">
    <property type="entry name" value="CYSTEINE--TRNA LIGASE, CYTOPLASMIC"/>
    <property type="match status" value="1"/>
</dbReference>
<dbReference type="PANTHER" id="PTHR10890">
    <property type="entry name" value="CYSTEINYL-TRNA SYNTHETASE"/>
    <property type="match status" value="1"/>
</dbReference>
<dbReference type="Pfam" id="PF23493">
    <property type="entry name" value="CysS_C"/>
    <property type="match status" value="1"/>
</dbReference>
<dbReference type="Pfam" id="PF09190">
    <property type="entry name" value="DALR_2"/>
    <property type="match status" value="1"/>
</dbReference>
<dbReference type="Pfam" id="PF01406">
    <property type="entry name" value="tRNA-synt_1e"/>
    <property type="match status" value="1"/>
</dbReference>
<dbReference type="PRINTS" id="PR00983">
    <property type="entry name" value="TRNASYNTHCYS"/>
</dbReference>
<dbReference type="SMART" id="SM00840">
    <property type="entry name" value="DALR_2"/>
    <property type="match status" value="1"/>
</dbReference>
<dbReference type="SUPFAM" id="SSF47323">
    <property type="entry name" value="Anticodon-binding domain of a subclass of class I aminoacyl-tRNA synthetases"/>
    <property type="match status" value="1"/>
</dbReference>
<dbReference type="SUPFAM" id="SSF52374">
    <property type="entry name" value="Nucleotidylyl transferase"/>
    <property type="match status" value="1"/>
</dbReference>
<keyword id="KW-0030">Aminoacyl-tRNA synthetase</keyword>
<keyword id="KW-0067">ATP-binding</keyword>
<keyword id="KW-0963">Cytoplasm</keyword>
<keyword id="KW-0436">Ligase</keyword>
<keyword id="KW-0479">Metal-binding</keyword>
<keyword id="KW-0547">Nucleotide-binding</keyword>
<keyword id="KW-0648">Protein biosynthesis</keyword>
<keyword id="KW-1185">Reference proteome</keyword>
<keyword id="KW-0862">Zinc</keyword>
<name>SYC_FRATH</name>
<evidence type="ECO:0000255" key="1">
    <source>
        <dbReference type="HAMAP-Rule" id="MF_00041"/>
    </source>
</evidence>
<feature type="chain" id="PRO_0000240914" description="Cysteine--tRNA ligase">
    <location>
        <begin position="1"/>
        <end position="464"/>
    </location>
</feature>
<feature type="short sequence motif" description="'HIGH' region">
    <location>
        <begin position="34"/>
        <end position="44"/>
    </location>
</feature>
<feature type="short sequence motif" description="'KMSKS' region">
    <location>
        <begin position="270"/>
        <end position="274"/>
    </location>
</feature>
<feature type="binding site" evidence="1">
    <location>
        <position position="32"/>
    </location>
    <ligand>
        <name>Zn(2+)</name>
        <dbReference type="ChEBI" id="CHEBI:29105"/>
    </ligand>
</feature>
<feature type="binding site" evidence="1">
    <location>
        <position position="213"/>
    </location>
    <ligand>
        <name>Zn(2+)</name>
        <dbReference type="ChEBI" id="CHEBI:29105"/>
    </ligand>
</feature>
<feature type="binding site" evidence="1">
    <location>
        <position position="238"/>
    </location>
    <ligand>
        <name>Zn(2+)</name>
        <dbReference type="ChEBI" id="CHEBI:29105"/>
    </ligand>
</feature>
<feature type="binding site" evidence="1">
    <location>
        <position position="242"/>
    </location>
    <ligand>
        <name>Zn(2+)</name>
        <dbReference type="ChEBI" id="CHEBI:29105"/>
    </ligand>
</feature>
<feature type="binding site" evidence="1">
    <location>
        <position position="273"/>
    </location>
    <ligand>
        <name>ATP</name>
        <dbReference type="ChEBI" id="CHEBI:30616"/>
    </ligand>
</feature>
<proteinExistence type="inferred from homology"/>
<organism>
    <name type="scientific">Francisella tularensis subsp. holarctica (strain LVS)</name>
    <dbReference type="NCBI Taxonomy" id="376619"/>
    <lineage>
        <taxon>Bacteria</taxon>
        <taxon>Pseudomonadati</taxon>
        <taxon>Pseudomonadota</taxon>
        <taxon>Gammaproteobacteria</taxon>
        <taxon>Thiotrichales</taxon>
        <taxon>Francisellaceae</taxon>
        <taxon>Francisella</taxon>
    </lineage>
</organism>
<gene>
    <name evidence="1" type="primary">cysS</name>
    <name type="ordered locus">FTL_1683</name>
</gene>
<comment type="catalytic activity">
    <reaction evidence="1">
        <text>tRNA(Cys) + L-cysteine + ATP = L-cysteinyl-tRNA(Cys) + AMP + diphosphate</text>
        <dbReference type="Rhea" id="RHEA:17773"/>
        <dbReference type="Rhea" id="RHEA-COMP:9661"/>
        <dbReference type="Rhea" id="RHEA-COMP:9679"/>
        <dbReference type="ChEBI" id="CHEBI:30616"/>
        <dbReference type="ChEBI" id="CHEBI:33019"/>
        <dbReference type="ChEBI" id="CHEBI:35235"/>
        <dbReference type="ChEBI" id="CHEBI:78442"/>
        <dbReference type="ChEBI" id="CHEBI:78517"/>
        <dbReference type="ChEBI" id="CHEBI:456215"/>
        <dbReference type="EC" id="6.1.1.16"/>
    </reaction>
</comment>
<comment type="cofactor">
    <cofactor evidence="1">
        <name>Zn(2+)</name>
        <dbReference type="ChEBI" id="CHEBI:29105"/>
    </cofactor>
    <text evidence="1">Binds 1 zinc ion per subunit.</text>
</comment>
<comment type="subunit">
    <text evidence="1">Monomer.</text>
</comment>
<comment type="subcellular location">
    <subcellularLocation>
        <location evidence="1">Cytoplasm</location>
    </subcellularLocation>
</comment>
<comment type="similarity">
    <text evidence="1">Belongs to the class-I aminoacyl-tRNA synthetase family.</text>
</comment>